<reference key="1">
    <citation type="journal article" date="2013" name="Plant Physiol.">
        <title>A Nostoc punctiforme Sugar Transporter Necessary to Establish a Cyanobacterium-Plant Symbiosis.</title>
        <authorList>
            <person name="Ekman M."/>
            <person name="Picossi S."/>
            <person name="Campbell E.L."/>
            <person name="Meeks J.C."/>
            <person name="Flores E."/>
        </authorList>
    </citation>
    <scope>NUCLEOTIDE SEQUENCE [LARGE SCALE GENOMIC DNA]</scope>
    <source>
        <strain>ATCC 29133 / PCC 73102</strain>
    </source>
</reference>
<name>CINAL_NOSP7</name>
<feature type="chain" id="PRO_1000100331" description="CinA-like protein">
    <location>
        <begin position="1"/>
        <end position="416"/>
    </location>
</feature>
<evidence type="ECO:0000255" key="1">
    <source>
        <dbReference type="HAMAP-Rule" id="MF_00226"/>
    </source>
</evidence>
<keyword id="KW-1185">Reference proteome</keyword>
<protein>
    <recommendedName>
        <fullName evidence="1">CinA-like protein</fullName>
    </recommendedName>
</protein>
<sequence>MSAEIICVGTELLLGDILNGNAQFLAQQLAQLGIPHYYQTVVGDNPERLKQVIEIAISRAQILIFTGGLGPTPDDLTCETIADFFKTPLVENPEIIEDITQKFAQRGRVMSPSNRKQALIPQGAEILPNPTGTAPGIIWQPRPKITIFTFPGVPSEMHPMWEETAVPFLKSQGWGKEIIYSRSLKFWGIGESALAEKVSSYLKLPNPTVAPYAGKGEVRLRVSAKATSEAAAEDLIAPIEKQLKEIAGLDFYGVNNDTLASVVGELLRASKETLSVAESCTGGGLGQMLTEISGSSDYFWGGVISYDNSVKIKLLGVNQEDLDKFGAVSATVAEQMAIGVKTRLATTWGLSITGIAGPTGGTDTKPVGLVYVGLAGPKDEVTSFEYQFGTVRGRALIRHVSANAALDNLRRKLLTR</sequence>
<organism>
    <name type="scientific">Nostoc punctiforme (strain ATCC 29133 / PCC 73102)</name>
    <dbReference type="NCBI Taxonomy" id="63737"/>
    <lineage>
        <taxon>Bacteria</taxon>
        <taxon>Bacillati</taxon>
        <taxon>Cyanobacteriota</taxon>
        <taxon>Cyanophyceae</taxon>
        <taxon>Nostocales</taxon>
        <taxon>Nostocaceae</taxon>
        <taxon>Nostoc</taxon>
    </lineage>
</organism>
<proteinExistence type="inferred from homology"/>
<dbReference type="EMBL" id="CP001037">
    <property type="protein sequence ID" value="ACC83489.1"/>
    <property type="molecule type" value="Genomic_DNA"/>
</dbReference>
<dbReference type="RefSeq" id="WP_012411442.1">
    <property type="nucleotide sequence ID" value="NC_010628.1"/>
</dbReference>
<dbReference type="SMR" id="B2J2A3"/>
<dbReference type="STRING" id="63737.Npun_F5157"/>
<dbReference type="EnsemblBacteria" id="ACC83489">
    <property type="protein sequence ID" value="ACC83489"/>
    <property type="gene ID" value="Npun_F5157"/>
</dbReference>
<dbReference type="KEGG" id="npu:Npun_F5157"/>
<dbReference type="eggNOG" id="COG1058">
    <property type="taxonomic scope" value="Bacteria"/>
</dbReference>
<dbReference type="eggNOG" id="COG1546">
    <property type="taxonomic scope" value="Bacteria"/>
</dbReference>
<dbReference type="HOGENOM" id="CLU_030805_9_3_3"/>
<dbReference type="OrthoDB" id="9801454at2"/>
<dbReference type="PhylomeDB" id="B2J2A3"/>
<dbReference type="Proteomes" id="UP000001191">
    <property type="component" value="Chromosome"/>
</dbReference>
<dbReference type="CDD" id="cd00885">
    <property type="entry name" value="cinA"/>
    <property type="match status" value="1"/>
</dbReference>
<dbReference type="Gene3D" id="3.30.70.2860">
    <property type="match status" value="1"/>
</dbReference>
<dbReference type="Gene3D" id="3.90.950.20">
    <property type="entry name" value="CinA-like"/>
    <property type="match status" value="1"/>
</dbReference>
<dbReference type="Gene3D" id="3.40.980.10">
    <property type="entry name" value="MoaB/Mog-like domain"/>
    <property type="match status" value="1"/>
</dbReference>
<dbReference type="HAMAP" id="MF_00226_B">
    <property type="entry name" value="CinA_B"/>
    <property type="match status" value="1"/>
</dbReference>
<dbReference type="InterPro" id="IPR050101">
    <property type="entry name" value="CinA"/>
</dbReference>
<dbReference type="InterPro" id="IPR036653">
    <property type="entry name" value="CinA-like_C"/>
</dbReference>
<dbReference type="InterPro" id="IPR008136">
    <property type="entry name" value="CinA_C"/>
</dbReference>
<dbReference type="InterPro" id="IPR041424">
    <property type="entry name" value="CinA_KH"/>
</dbReference>
<dbReference type="InterPro" id="IPR008135">
    <property type="entry name" value="Competence-induced_CinA"/>
</dbReference>
<dbReference type="InterPro" id="IPR036425">
    <property type="entry name" value="MoaB/Mog-like_dom_sf"/>
</dbReference>
<dbReference type="InterPro" id="IPR001453">
    <property type="entry name" value="MoaB/Mog_dom"/>
</dbReference>
<dbReference type="NCBIfam" id="TIGR00200">
    <property type="entry name" value="cinA_nterm"/>
    <property type="match status" value="1"/>
</dbReference>
<dbReference type="NCBIfam" id="TIGR00177">
    <property type="entry name" value="molyb_syn"/>
    <property type="match status" value="1"/>
</dbReference>
<dbReference type="NCBIfam" id="TIGR00199">
    <property type="entry name" value="PncC_domain"/>
    <property type="match status" value="1"/>
</dbReference>
<dbReference type="NCBIfam" id="NF001813">
    <property type="entry name" value="PRK00549.1"/>
    <property type="match status" value="1"/>
</dbReference>
<dbReference type="PANTHER" id="PTHR13939">
    <property type="entry name" value="NICOTINAMIDE-NUCLEOTIDE AMIDOHYDROLASE PNCC"/>
    <property type="match status" value="1"/>
</dbReference>
<dbReference type="PANTHER" id="PTHR13939:SF0">
    <property type="entry name" value="NMN AMIDOHYDROLASE-LIKE PROTEIN YFAY"/>
    <property type="match status" value="1"/>
</dbReference>
<dbReference type="Pfam" id="PF02464">
    <property type="entry name" value="CinA"/>
    <property type="match status" value="1"/>
</dbReference>
<dbReference type="Pfam" id="PF18146">
    <property type="entry name" value="CinA_KH"/>
    <property type="match status" value="1"/>
</dbReference>
<dbReference type="Pfam" id="PF00994">
    <property type="entry name" value="MoCF_biosynth"/>
    <property type="match status" value="1"/>
</dbReference>
<dbReference type="PIRSF" id="PIRSF006728">
    <property type="entry name" value="CinA"/>
    <property type="match status" value="1"/>
</dbReference>
<dbReference type="SMART" id="SM00852">
    <property type="entry name" value="MoCF_biosynth"/>
    <property type="match status" value="1"/>
</dbReference>
<dbReference type="SUPFAM" id="SSF142433">
    <property type="entry name" value="CinA-like"/>
    <property type="match status" value="1"/>
</dbReference>
<dbReference type="SUPFAM" id="SSF53218">
    <property type="entry name" value="Molybdenum cofactor biosynthesis proteins"/>
    <property type="match status" value="1"/>
</dbReference>
<comment type="similarity">
    <text evidence="1">Belongs to the CinA family.</text>
</comment>
<gene>
    <name type="ordered locus">Npun_F5157</name>
</gene>
<accession>B2J2A3</accession>